<gene>
    <name type="primary">HOXD10</name>
</gene>
<organism>
    <name type="scientific">Pan troglodytes</name>
    <name type="common">Chimpanzee</name>
    <dbReference type="NCBI Taxonomy" id="9598"/>
    <lineage>
        <taxon>Eukaryota</taxon>
        <taxon>Metazoa</taxon>
        <taxon>Chordata</taxon>
        <taxon>Craniata</taxon>
        <taxon>Vertebrata</taxon>
        <taxon>Euteleostomi</taxon>
        <taxon>Mammalia</taxon>
        <taxon>Eutheria</taxon>
        <taxon>Euarchontoglires</taxon>
        <taxon>Primates</taxon>
        <taxon>Haplorrhini</taxon>
        <taxon>Catarrhini</taxon>
        <taxon>Hominidae</taxon>
        <taxon>Pan</taxon>
    </lineage>
</organism>
<dbReference type="EMBL" id="DQ977420">
    <property type="protein sequence ID" value="ABM92086.1"/>
    <property type="molecule type" value="Genomic_DNA"/>
</dbReference>
<dbReference type="STRING" id="9598.ENSPTRP00000021646"/>
<dbReference type="PaxDb" id="9598-ENSPTRP00000021646"/>
<dbReference type="eggNOG" id="KOG0487">
    <property type="taxonomic scope" value="Eukaryota"/>
</dbReference>
<dbReference type="InParanoid" id="A2T7D1"/>
<dbReference type="Proteomes" id="UP000002277">
    <property type="component" value="Unplaced"/>
</dbReference>
<dbReference type="GO" id="GO:0005634">
    <property type="term" value="C:nucleus"/>
    <property type="evidence" value="ECO:0000318"/>
    <property type="project" value="GO_Central"/>
</dbReference>
<dbReference type="GO" id="GO:0000981">
    <property type="term" value="F:DNA-binding transcription factor activity, RNA polymerase II-specific"/>
    <property type="evidence" value="ECO:0000318"/>
    <property type="project" value="GO_Central"/>
</dbReference>
<dbReference type="GO" id="GO:0000978">
    <property type="term" value="F:RNA polymerase II cis-regulatory region sequence-specific DNA binding"/>
    <property type="evidence" value="ECO:0000318"/>
    <property type="project" value="GO_Central"/>
</dbReference>
<dbReference type="GO" id="GO:0006357">
    <property type="term" value="P:regulation of transcription by RNA polymerase II"/>
    <property type="evidence" value="ECO:0000318"/>
    <property type="project" value="GO_Central"/>
</dbReference>
<dbReference type="CDD" id="cd00086">
    <property type="entry name" value="homeodomain"/>
    <property type="match status" value="1"/>
</dbReference>
<dbReference type="FunFam" id="1.10.10.60:FF:000018">
    <property type="entry name" value="Homeobox A10"/>
    <property type="match status" value="1"/>
</dbReference>
<dbReference type="Gene3D" id="1.10.10.60">
    <property type="entry name" value="Homeodomain-like"/>
    <property type="match status" value="1"/>
</dbReference>
<dbReference type="InterPro" id="IPR001356">
    <property type="entry name" value="HD"/>
</dbReference>
<dbReference type="InterPro" id="IPR020479">
    <property type="entry name" value="HD_metazoa"/>
</dbReference>
<dbReference type="InterPro" id="IPR017970">
    <property type="entry name" value="Homeobox_CS"/>
</dbReference>
<dbReference type="InterPro" id="IPR009057">
    <property type="entry name" value="Homeodomain-like_sf"/>
</dbReference>
<dbReference type="InterPro" id="IPR046333">
    <property type="entry name" value="HXA10/ABDB-like"/>
</dbReference>
<dbReference type="PANTHER" id="PTHR45874">
    <property type="entry name" value="HOMEOBOX PROTEIN ABDOMINAL-B"/>
    <property type="match status" value="1"/>
</dbReference>
<dbReference type="PANTHER" id="PTHR45874:SF5">
    <property type="entry name" value="HOMEOBOX PROTEIN HOX-D10"/>
    <property type="match status" value="1"/>
</dbReference>
<dbReference type="Pfam" id="PF00046">
    <property type="entry name" value="Homeodomain"/>
    <property type="match status" value="1"/>
</dbReference>
<dbReference type="PRINTS" id="PR00024">
    <property type="entry name" value="HOMEOBOX"/>
</dbReference>
<dbReference type="SMART" id="SM00389">
    <property type="entry name" value="HOX"/>
    <property type="match status" value="1"/>
</dbReference>
<dbReference type="SUPFAM" id="SSF46689">
    <property type="entry name" value="Homeodomain-like"/>
    <property type="match status" value="1"/>
</dbReference>
<dbReference type="PROSITE" id="PS00027">
    <property type="entry name" value="HOMEOBOX_1"/>
    <property type="match status" value="1"/>
</dbReference>
<dbReference type="PROSITE" id="PS50071">
    <property type="entry name" value="HOMEOBOX_2"/>
    <property type="match status" value="1"/>
</dbReference>
<name>HXD10_PANTR</name>
<reference key="1">
    <citation type="submission" date="2006-08" db="EMBL/GenBank/DDBJ databases">
        <title>Positive selection in transcription factor genes on the human lineage.</title>
        <authorList>
            <person name="Nickel G.C."/>
            <person name="Tefft D.L."/>
            <person name="Trevarthen K."/>
            <person name="Funt J."/>
            <person name="Adams M.D."/>
        </authorList>
    </citation>
    <scope>NUCLEOTIDE SEQUENCE [GENOMIC DNA]</scope>
</reference>
<feature type="chain" id="PRO_0000285440" description="Homeobox protein Hox-D10">
    <location>
        <begin position="1"/>
        <end position="340"/>
    </location>
</feature>
<feature type="DNA-binding region" description="Homeobox" evidence="3">
    <location>
        <begin position="266"/>
        <end position="325"/>
    </location>
</feature>
<feature type="region of interest" description="Disordered" evidence="4">
    <location>
        <begin position="199"/>
        <end position="227"/>
    </location>
</feature>
<feature type="compositionally biased region" description="Polar residues" evidence="4">
    <location>
        <begin position="208"/>
        <end position="217"/>
    </location>
</feature>
<feature type="modified residue" description="Phosphoserine" evidence="2">
    <location>
        <position position="238"/>
    </location>
</feature>
<feature type="modified residue" description="Phosphoserine" evidence="2">
    <location>
        <position position="239"/>
    </location>
</feature>
<sequence length="340" mass="38418">MSFPNSSPAANTFLVDSLISACRSDSFYSSSASMYMPPPSADMGTYGMQTCGLLPSLAKREVNHQNMGMNVHPYIPQVDSWTDPNRSCRIEQPVTQQVPTCSFTTNIKEESNCCMYSDKRNKLISAEVPSYQRLVPESCPVENPEVPVPGYFRLSQTYATGKTQEYNNSPEGSSTVMLQLNPRGAAKPQLSAAQLQMEKKMNEPVSGQEPTKVSQVESPEAKGGLPEERSCLAEVSVSSPEVQEKESKEEIXXDTPTSNWLTAKSGRKKRCPYTKHQTLELEKEFLFNMYLTRERRLEISKSVNLTDRQVKIWFQNRRMKLKKMSRENRIRELTANLTFS</sequence>
<proteinExistence type="inferred from homology"/>
<accession>A2T7D1</accession>
<keyword id="KW-0217">Developmental protein</keyword>
<keyword id="KW-0238">DNA-binding</keyword>
<keyword id="KW-0371">Homeobox</keyword>
<keyword id="KW-0539">Nucleus</keyword>
<keyword id="KW-0597">Phosphoprotein</keyword>
<keyword id="KW-1185">Reference proteome</keyword>
<keyword id="KW-0804">Transcription</keyword>
<keyword id="KW-0805">Transcription regulation</keyword>
<comment type="function">
    <text evidence="1">Sequence-specific transcription factor which is part of a developmental regulatory system that provides cells with specific positional identities on the anterior-posterior axis.</text>
</comment>
<comment type="subcellular location">
    <subcellularLocation>
        <location evidence="3">Nucleus</location>
    </subcellularLocation>
</comment>
<comment type="similarity">
    <text evidence="5">Belongs to the Abd-B homeobox family.</text>
</comment>
<protein>
    <recommendedName>
        <fullName>Homeobox protein Hox-D10</fullName>
    </recommendedName>
</protein>
<evidence type="ECO:0000250" key="1"/>
<evidence type="ECO:0000250" key="2">
    <source>
        <dbReference type="UniProtKB" id="P28359"/>
    </source>
</evidence>
<evidence type="ECO:0000255" key="3">
    <source>
        <dbReference type="PROSITE-ProRule" id="PRU00108"/>
    </source>
</evidence>
<evidence type="ECO:0000256" key="4">
    <source>
        <dbReference type="SAM" id="MobiDB-lite"/>
    </source>
</evidence>
<evidence type="ECO:0000305" key="5"/>